<proteinExistence type="evidence at protein level"/>
<sequence length="709" mass="80003">MLLLQQPPLVSTRFHSLYFLTHHHHHHHRFFQPPISAFSATTSASLPSPSPSSSSSYFSSWNGLDTNEEEDNEFSSEVHRRYDFSPLLKFLSRFGPVELALDSESESEASPESLNPVEFDLVESYRAVPAPYWHSLIKSLTSSTSSLGLAYAVVSWLQKHNLCFSYELLYSILIHALGRSEKLYEAFLLSQKQTLTPLTYNALIGACARNNDIEKALNLIAKMRQDGYQSDFVNYSLVIQSLTRSNKIDSVMLLRLYKEIERDKLELDVQLVNDIIMGFAKSGDPSKALQLLGMAQATGLSAKTATLVSIISALADSGRTLEAEALFEELRQSGIKPRTRAYNALLKGYVKTGPLKDAESMVSEMEKRGVSPDEHTYSLLIDAYVNAGRWESARIVLKEMEAGDVQPNSFVFSRLLAGFRDRGEWQKTFQVLKEMKSIGVKPDRQFYNVVIDTFGKFNCLDHAMTTFDRMLSEGIEPDRVTWNTLIDCHCKHGRHIVAEEMFEAMERRGCLPCATTYNIMINSYGDQERWDDMKRLLGKMKSQGILPNVVTHTTLVDVYGKSGRFNDAIECLEEMKSVGLKPSSTMYNALINAYAQRGLSEQAVNAFRVMTSDGLKPSLLALNSLINAFGEDRRDAEAFAVLQYMKENGVKPDVVTYTTLMKALIRVDKFQKVPVVYEEMIMSGCKPDRKARSMLRSALRYMKQTLRAS</sequence>
<name>PP413_ARATH</name>
<evidence type="ECO:0000255" key="1"/>
<evidence type="ECO:0000269" key="2">
    <source>
    </source>
</evidence>
<evidence type="ECO:0000269" key="3">
    <source>
    </source>
</evidence>
<evidence type="ECO:0000303" key="4">
    <source>
    </source>
</evidence>
<evidence type="ECO:0000305" key="5"/>
<evidence type="ECO:0000312" key="6">
    <source>
        <dbReference type="Araport" id="AT5G42310"/>
    </source>
</evidence>
<evidence type="ECO:0000312" key="7">
    <source>
        <dbReference type="EMBL" id="BAB10204.1"/>
    </source>
</evidence>
<accession>Q8L844</accession>
<accession>Q9FGZ8</accession>
<organism>
    <name type="scientific">Arabidopsis thaliana</name>
    <name type="common">Mouse-ear cress</name>
    <dbReference type="NCBI Taxonomy" id="3702"/>
    <lineage>
        <taxon>Eukaryota</taxon>
        <taxon>Viridiplantae</taxon>
        <taxon>Streptophyta</taxon>
        <taxon>Embryophyta</taxon>
        <taxon>Tracheophyta</taxon>
        <taxon>Spermatophyta</taxon>
        <taxon>Magnoliopsida</taxon>
        <taxon>eudicotyledons</taxon>
        <taxon>Gunneridae</taxon>
        <taxon>Pentapetalae</taxon>
        <taxon>rosids</taxon>
        <taxon>malvids</taxon>
        <taxon>Brassicales</taxon>
        <taxon>Brassicaceae</taxon>
        <taxon>Camelineae</taxon>
        <taxon>Arabidopsis</taxon>
    </lineage>
</organism>
<comment type="function">
    <text evidence="2">Required for chloroplast protein synthesis and accumulation of subunits of the thylakoid protein complexes. Activates psaC and petA translation by binding their 5'-UTRs. Required for the correct processing of petB and petD mRNAs. Interacts with the petB and petD intergenic region and is required for the generation of petB and petD monocistronic RNAs.</text>
</comment>
<comment type="subunit">
    <text evidence="3">Interacts with PDE338.</text>
</comment>
<comment type="subcellular location">
    <subcellularLocation>
        <location evidence="2">Plastid</location>
        <location evidence="2">Chloroplast stroma</location>
    </subcellularLocation>
    <subcellularLocation>
        <location evidence="2">Plastid</location>
        <location evidence="2">Chloroplast thylakoid</location>
    </subcellularLocation>
    <subcellularLocation>
        <location evidence="3">Plastid</location>
        <location evidence="3">Chloroplast</location>
    </subcellularLocation>
</comment>
<comment type="disruption phenotype">
    <text evidence="2">Seedling lethality under normal growth conditions.</text>
</comment>
<comment type="similarity">
    <text evidence="5">Belongs to the PPR family. P subfamily.</text>
</comment>
<comment type="sequence caution" evidence="5">
    <conflict type="erroneous gene model prediction">
        <sequence resource="EMBL-CDS" id="BAB10204"/>
    </conflict>
</comment>
<comment type="online information" name="Pentatricopeptide repeat proteins">
    <link uri="https://ppr.plantenergy.uwa.edu.au"/>
</comment>
<dbReference type="EMBL" id="AB023032">
    <property type="protein sequence ID" value="BAB10204.1"/>
    <property type="status" value="ALT_SEQ"/>
    <property type="molecule type" value="Genomic_DNA"/>
</dbReference>
<dbReference type="EMBL" id="CP002688">
    <property type="protein sequence ID" value="AED94794.1"/>
    <property type="molecule type" value="Genomic_DNA"/>
</dbReference>
<dbReference type="EMBL" id="AY120753">
    <property type="protein sequence ID" value="AAM53311.1"/>
    <property type="molecule type" value="mRNA"/>
</dbReference>
<dbReference type="RefSeq" id="NP_199046.1">
    <property type="nucleotide sequence ID" value="NM_123596.4"/>
</dbReference>
<dbReference type="SMR" id="Q8L844"/>
<dbReference type="FunCoup" id="Q8L844">
    <property type="interactions" value="534"/>
</dbReference>
<dbReference type="STRING" id="3702.Q8L844"/>
<dbReference type="iPTMnet" id="Q8L844"/>
<dbReference type="PaxDb" id="3702-AT5G42310.1"/>
<dbReference type="ProteomicsDB" id="249294"/>
<dbReference type="EnsemblPlants" id="AT5G42310.1">
    <property type="protein sequence ID" value="AT5G42310.1"/>
    <property type="gene ID" value="AT5G42310"/>
</dbReference>
<dbReference type="GeneID" id="834236"/>
<dbReference type="Gramene" id="AT5G42310.1">
    <property type="protein sequence ID" value="AT5G42310.1"/>
    <property type="gene ID" value="AT5G42310"/>
</dbReference>
<dbReference type="KEGG" id="ath:AT5G42310"/>
<dbReference type="Araport" id="AT5G42310"/>
<dbReference type="TAIR" id="AT5G42310">
    <property type="gene designation" value="CRP1"/>
</dbReference>
<dbReference type="eggNOG" id="KOG4197">
    <property type="taxonomic scope" value="Eukaryota"/>
</dbReference>
<dbReference type="HOGENOM" id="CLU_002706_49_12_1"/>
<dbReference type="InParanoid" id="Q8L844"/>
<dbReference type="OMA" id="HCKAGRH"/>
<dbReference type="PhylomeDB" id="Q8L844"/>
<dbReference type="PRO" id="PR:Q8L844"/>
<dbReference type="Proteomes" id="UP000006548">
    <property type="component" value="Chromosome 5"/>
</dbReference>
<dbReference type="ExpressionAtlas" id="Q8L844">
    <property type="expression patterns" value="baseline and differential"/>
</dbReference>
<dbReference type="GO" id="GO:0009507">
    <property type="term" value="C:chloroplast"/>
    <property type="evidence" value="ECO:0000314"/>
    <property type="project" value="UniProtKB"/>
</dbReference>
<dbReference type="GO" id="GO:0042644">
    <property type="term" value="C:chloroplast nucleoid"/>
    <property type="evidence" value="ECO:0000314"/>
    <property type="project" value="TAIR"/>
</dbReference>
<dbReference type="GO" id="GO:0009570">
    <property type="term" value="C:chloroplast stroma"/>
    <property type="evidence" value="ECO:0000314"/>
    <property type="project" value="TAIR"/>
</dbReference>
<dbReference type="GO" id="GO:0009534">
    <property type="term" value="C:chloroplast thylakoid"/>
    <property type="evidence" value="ECO:0007669"/>
    <property type="project" value="UniProtKB-SubCell"/>
</dbReference>
<dbReference type="GO" id="GO:0042651">
    <property type="term" value="C:thylakoid membrane"/>
    <property type="evidence" value="ECO:0000314"/>
    <property type="project" value="TAIR"/>
</dbReference>
<dbReference type="GO" id="GO:0003729">
    <property type="term" value="F:mRNA binding"/>
    <property type="evidence" value="ECO:0000314"/>
    <property type="project" value="TAIR"/>
</dbReference>
<dbReference type="GO" id="GO:0003727">
    <property type="term" value="F:single-stranded RNA binding"/>
    <property type="evidence" value="ECO:0000314"/>
    <property type="project" value="TAIR"/>
</dbReference>
<dbReference type="GO" id="GO:0010239">
    <property type="term" value="P:chloroplast mRNA processing"/>
    <property type="evidence" value="ECO:0000315"/>
    <property type="project" value="TAIR"/>
</dbReference>
<dbReference type="GO" id="GO:0009658">
    <property type="term" value="P:chloroplast organization"/>
    <property type="evidence" value="ECO:0000315"/>
    <property type="project" value="TAIR"/>
</dbReference>
<dbReference type="GO" id="GO:0006417">
    <property type="term" value="P:regulation of translation"/>
    <property type="evidence" value="ECO:0007669"/>
    <property type="project" value="UniProtKB-KW"/>
</dbReference>
<dbReference type="FunFam" id="1.25.40.10:FF:000843">
    <property type="entry name" value="Pentatricopeptide repeat-containing protein"/>
    <property type="match status" value="1"/>
</dbReference>
<dbReference type="FunFam" id="1.25.40.10:FF:000947">
    <property type="entry name" value="Pentatricopeptide repeat-containing protein, chloroplastic isoform A"/>
    <property type="match status" value="1"/>
</dbReference>
<dbReference type="FunFam" id="1.25.40.10:FF:001770">
    <property type="entry name" value="Pentatricopeptide repeat-containing protein, chloroplastic isoform A"/>
    <property type="match status" value="1"/>
</dbReference>
<dbReference type="FunFam" id="1.25.40.10:FF:001972">
    <property type="entry name" value="Pentatricopeptide repeat-containing protein, chloroplastic isoform B"/>
    <property type="match status" value="1"/>
</dbReference>
<dbReference type="Gene3D" id="1.25.40.10">
    <property type="entry name" value="Tetratricopeptide repeat domain"/>
    <property type="match status" value="4"/>
</dbReference>
<dbReference type="InterPro" id="IPR002885">
    <property type="entry name" value="Pentatricopeptide_rpt"/>
</dbReference>
<dbReference type="InterPro" id="IPR011990">
    <property type="entry name" value="TPR-like_helical_dom_sf"/>
</dbReference>
<dbReference type="NCBIfam" id="TIGR00756">
    <property type="entry name" value="PPR"/>
    <property type="match status" value="11"/>
</dbReference>
<dbReference type="PANTHER" id="PTHR47447">
    <property type="entry name" value="OS03G0856100 PROTEIN"/>
    <property type="match status" value="1"/>
</dbReference>
<dbReference type="PANTHER" id="PTHR47447:SF24">
    <property type="entry name" value="PENTATRICOPEPTIDE REPEAT-CONTAINING PROTEIN"/>
    <property type="match status" value="1"/>
</dbReference>
<dbReference type="Pfam" id="PF01535">
    <property type="entry name" value="PPR"/>
    <property type="match status" value="2"/>
</dbReference>
<dbReference type="Pfam" id="PF13041">
    <property type="entry name" value="PPR_2"/>
    <property type="match status" value="4"/>
</dbReference>
<dbReference type="Pfam" id="PF13812">
    <property type="entry name" value="PPR_3"/>
    <property type="match status" value="2"/>
</dbReference>
<dbReference type="PROSITE" id="PS51375">
    <property type="entry name" value="PPR"/>
    <property type="match status" value="14"/>
</dbReference>
<gene>
    <name evidence="4" type="primary">CRP1</name>
    <name evidence="6" type="ordered locus">At5g42310</name>
    <name evidence="7" type="ORF">K5J14.11</name>
</gene>
<protein>
    <recommendedName>
        <fullName evidence="5">Pentatricopeptide repeat-containing protein At5g42310, chloroplastic</fullName>
    </recommendedName>
    <alternativeName>
        <fullName evidence="4">Protein CRP1 homolog</fullName>
        <shortName evidence="4">AtCRP1</shortName>
    </alternativeName>
</protein>
<feature type="transit peptide" description="Chloroplast" evidence="1">
    <location>
        <begin position="1"/>
        <end position="54"/>
    </location>
</feature>
<feature type="chain" id="PRO_0000363550" description="Pentatricopeptide repeat-containing protein At5g42310, chloroplastic">
    <location>
        <begin position="55"/>
        <end position="709"/>
    </location>
</feature>
<feature type="repeat" description="PPR 1">
    <location>
        <begin position="196"/>
        <end position="230"/>
    </location>
</feature>
<feature type="repeat" description="PPR 2">
    <location>
        <begin position="231"/>
        <end position="267"/>
    </location>
</feature>
<feature type="repeat" description="PPR 3">
    <location>
        <begin position="268"/>
        <end position="302"/>
    </location>
</feature>
<feature type="repeat" description="PPR 4">
    <location>
        <begin position="303"/>
        <end position="337"/>
    </location>
</feature>
<feature type="repeat" description="PPR 5">
    <location>
        <begin position="338"/>
        <end position="372"/>
    </location>
</feature>
<feature type="repeat" description="PPR 6">
    <location>
        <begin position="373"/>
        <end position="407"/>
    </location>
</feature>
<feature type="repeat" description="PPR 7">
    <location>
        <begin position="408"/>
        <end position="442"/>
    </location>
</feature>
<feature type="repeat" description="PPR 8">
    <location>
        <begin position="443"/>
        <end position="477"/>
    </location>
</feature>
<feature type="repeat" description="PPR 9">
    <location>
        <begin position="478"/>
        <end position="512"/>
    </location>
</feature>
<feature type="repeat" description="PPR 10">
    <location>
        <begin position="513"/>
        <end position="547"/>
    </location>
</feature>
<feature type="repeat" description="PPR 11">
    <location>
        <begin position="548"/>
        <end position="582"/>
    </location>
</feature>
<feature type="repeat" description="PPR 12">
    <location>
        <begin position="583"/>
        <end position="617"/>
    </location>
</feature>
<feature type="repeat" description="PPR 13">
    <location>
        <begin position="618"/>
        <end position="652"/>
    </location>
</feature>
<feature type="repeat" description="PPR 14">
    <location>
        <begin position="653"/>
        <end position="687"/>
    </location>
</feature>
<keyword id="KW-0150">Chloroplast</keyword>
<keyword id="KW-0507">mRNA processing</keyword>
<keyword id="KW-0934">Plastid</keyword>
<keyword id="KW-1185">Reference proteome</keyword>
<keyword id="KW-0677">Repeat</keyword>
<keyword id="KW-0694">RNA-binding</keyword>
<keyword id="KW-0793">Thylakoid</keyword>
<keyword id="KW-0809">Transit peptide</keyword>
<keyword id="KW-0810">Translation regulation</keyword>
<reference key="1">
    <citation type="journal article" date="2000" name="DNA Res.">
        <title>Structural analysis of Arabidopsis thaliana chromosome 5. X. Sequence features of the regions of 3,076,755 bp covered by sixty P1 and TAC clones.</title>
        <authorList>
            <person name="Sato S."/>
            <person name="Nakamura Y."/>
            <person name="Kaneko T."/>
            <person name="Katoh T."/>
            <person name="Asamizu E."/>
            <person name="Kotani H."/>
            <person name="Tabata S."/>
        </authorList>
    </citation>
    <scope>NUCLEOTIDE SEQUENCE [LARGE SCALE GENOMIC DNA]</scope>
    <source>
        <strain>cv. Columbia</strain>
    </source>
</reference>
<reference key="2">
    <citation type="journal article" date="2017" name="Plant J.">
        <title>Araport11: a complete reannotation of the Arabidopsis thaliana reference genome.</title>
        <authorList>
            <person name="Cheng C.Y."/>
            <person name="Krishnakumar V."/>
            <person name="Chan A.P."/>
            <person name="Thibaud-Nissen F."/>
            <person name="Schobel S."/>
            <person name="Town C.D."/>
        </authorList>
    </citation>
    <scope>GENOME REANNOTATION</scope>
    <source>
        <strain>cv. Columbia</strain>
    </source>
</reference>
<reference key="3">
    <citation type="journal article" date="2003" name="Science">
        <title>Empirical analysis of transcriptional activity in the Arabidopsis genome.</title>
        <authorList>
            <person name="Yamada K."/>
            <person name="Lim J."/>
            <person name="Dale J.M."/>
            <person name="Chen H."/>
            <person name="Shinn P."/>
            <person name="Palm C.J."/>
            <person name="Southwick A.M."/>
            <person name="Wu H.C."/>
            <person name="Kim C.J."/>
            <person name="Nguyen M."/>
            <person name="Pham P.K."/>
            <person name="Cheuk R.F."/>
            <person name="Karlin-Newmann G."/>
            <person name="Liu S.X."/>
            <person name="Lam B."/>
            <person name="Sakano H."/>
            <person name="Wu T."/>
            <person name="Yu G."/>
            <person name="Miranda M."/>
            <person name="Quach H.L."/>
            <person name="Tripp M."/>
            <person name="Chang C.H."/>
            <person name="Lee J.M."/>
            <person name="Toriumi M.J."/>
            <person name="Chan M.M."/>
            <person name="Tang C.C."/>
            <person name="Onodera C.S."/>
            <person name="Deng J.M."/>
            <person name="Akiyama K."/>
            <person name="Ansari Y."/>
            <person name="Arakawa T."/>
            <person name="Banh J."/>
            <person name="Banno F."/>
            <person name="Bowser L."/>
            <person name="Brooks S.Y."/>
            <person name="Carninci P."/>
            <person name="Chao Q."/>
            <person name="Choy N."/>
            <person name="Enju A."/>
            <person name="Goldsmith A.D."/>
            <person name="Gurjal M."/>
            <person name="Hansen N.F."/>
            <person name="Hayashizaki Y."/>
            <person name="Johnson-Hopson C."/>
            <person name="Hsuan V.W."/>
            <person name="Iida K."/>
            <person name="Karnes M."/>
            <person name="Khan S."/>
            <person name="Koesema E."/>
            <person name="Ishida J."/>
            <person name="Jiang P.X."/>
            <person name="Jones T."/>
            <person name="Kawai J."/>
            <person name="Kamiya A."/>
            <person name="Meyers C."/>
            <person name="Nakajima M."/>
            <person name="Narusaka M."/>
            <person name="Seki M."/>
            <person name="Sakurai T."/>
            <person name="Satou M."/>
            <person name="Tamse R."/>
            <person name="Vaysberg M."/>
            <person name="Wallender E.K."/>
            <person name="Wong C."/>
            <person name="Yamamura Y."/>
            <person name="Yuan S."/>
            <person name="Shinozaki K."/>
            <person name="Davis R.W."/>
            <person name="Theologis A."/>
            <person name="Ecker J.R."/>
        </authorList>
    </citation>
    <scope>NUCLEOTIDE SEQUENCE [LARGE SCALE MRNA]</scope>
    <source>
        <strain>cv. Columbia</strain>
    </source>
</reference>
<reference key="4">
    <citation type="journal article" date="2004" name="Plant Cell">
        <title>Genome-wide analysis of Arabidopsis pentatricopeptide repeat proteins reveals their essential role in organelle biogenesis.</title>
        <authorList>
            <person name="Lurin C."/>
            <person name="Andres C."/>
            <person name="Aubourg S."/>
            <person name="Bellaoui M."/>
            <person name="Bitton F."/>
            <person name="Bruyere C."/>
            <person name="Caboche M."/>
            <person name="Debast C."/>
            <person name="Gualberto J."/>
            <person name="Hoffmann B."/>
            <person name="Lecharny A."/>
            <person name="Le Ret M."/>
            <person name="Martin-Magniette M.-L."/>
            <person name="Mireau H."/>
            <person name="Peeters N."/>
            <person name="Renou J.-P."/>
            <person name="Szurek B."/>
            <person name="Taconnat L."/>
            <person name="Small I."/>
        </authorList>
    </citation>
    <scope>GENE FAMILY</scope>
</reference>
<reference key="5">
    <citation type="journal article" date="2017" name="Front. Plant Sci.">
        <title>CRP1 Protein: (dis)similarities between Arabidopsis thaliana and Zea mays.</title>
        <authorList>
            <person name="Ferrari R."/>
            <person name="Tadini L."/>
            <person name="Moratti F."/>
            <person name="Lehniger M.K."/>
            <person name="Costa A."/>
            <person name="Rossi F."/>
            <person name="Colombo M."/>
            <person name="Masiero S."/>
            <person name="Schmitz-Linneweber C."/>
            <person name="Pesaresi P."/>
        </authorList>
    </citation>
    <scope>FUNCTION</scope>
    <scope>SUBCELLULAR LOCATION</scope>
    <scope>DISRUPTION PHENOTYPE</scope>
</reference>
<reference key="6">
    <citation type="journal article" date="2019" name="Plant Cell">
        <title>An RNA Chaperone-Like Protein Plays Critical Roles in Chloroplast mRNA Stability and Translation in Arabidopsis and Maize.</title>
        <authorList>
            <person name="Jiang J."/>
            <person name="Chai X."/>
            <person name="Manavski N."/>
            <person name="Williams-Carrier R."/>
            <person name="He B."/>
            <person name="Brachmann A."/>
            <person name="Ji D."/>
            <person name="Ouyang M."/>
            <person name="Liu Y."/>
            <person name="Barkan A."/>
            <person name="Meurer J."/>
            <person name="Zhang L."/>
            <person name="Chi W."/>
        </authorList>
    </citation>
    <scope>INTERACTION WITH PDE338</scope>
    <scope>SUBCELLULAR LOCATION</scope>
</reference>